<feature type="chain" id="PRO_0000294319" description="Fibrinogen C domain-containing protein 1-B">
    <location>
        <begin position="1"/>
        <end position="457"/>
    </location>
</feature>
<feature type="topological domain" description="Cytoplasmic" evidence="2">
    <location>
        <begin position="1"/>
        <end position="33"/>
    </location>
</feature>
<feature type="transmembrane region" description="Helical; Signal-anchor for type II membrane protein" evidence="2">
    <location>
        <begin position="34"/>
        <end position="54"/>
    </location>
</feature>
<feature type="topological domain" description="Extracellular" evidence="2">
    <location>
        <begin position="55"/>
        <end position="457"/>
    </location>
</feature>
<feature type="domain" description="Fibrinogen C-terminal" evidence="3">
    <location>
        <begin position="231"/>
        <end position="454"/>
    </location>
</feature>
<feature type="region of interest" description="Disordered" evidence="4">
    <location>
        <begin position="1"/>
        <end position="21"/>
    </location>
</feature>
<feature type="binding site" evidence="1">
    <location>
        <position position="389"/>
    </location>
    <ligand>
        <name>Ca(2+)</name>
        <dbReference type="ChEBI" id="CHEBI:29108"/>
    </ligand>
</feature>
<feature type="binding site" evidence="1">
    <location>
        <position position="391"/>
    </location>
    <ligand>
        <name>Ca(2+)</name>
        <dbReference type="ChEBI" id="CHEBI:29108"/>
    </ligand>
</feature>
<feature type="site" description="Implicated in ligand binding" evidence="1">
    <location>
        <position position="401"/>
    </location>
</feature>
<feature type="site" description="Implicated in ligand binding" evidence="1">
    <location>
        <position position="411"/>
    </location>
</feature>
<feature type="site" description="Implicated in ligand binding" evidence="1">
    <location>
        <position position="427"/>
    </location>
</feature>
<feature type="site" description="Implicated in ligand binding" evidence="1">
    <location>
        <position position="428"/>
    </location>
</feature>
<feature type="glycosylation site" description="N-linked (GlcNAc...) asparagine" evidence="2">
    <location>
        <position position="233"/>
    </location>
</feature>
<feature type="glycosylation site" description="N-linked (GlcNAc...) asparagine" evidence="2">
    <location>
        <position position="336"/>
    </location>
</feature>
<feature type="disulfide bond" evidence="3">
    <location>
        <begin position="240"/>
        <end position="269"/>
    </location>
</feature>
<feature type="disulfide bond" evidence="3">
    <location>
        <begin position="397"/>
        <end position="410"/>
    </location>
</feature>
<keyword id="KW-0106">Calcium</keyword>
<keyword id="KW-0147">Chitin-binding</keyword>
<keyword id="KW-1015">Disulfide bond</keyword>
<keyword id="KW-0325">Glycoprotein</keyword>
<keyword id="KW-0472">Membrane</keyword>
<keyword id="KW-0479">Metal-binding</keyword>
<keyword id="KW-1185">Reference proteome</keyword>
<keyword id="KW-0735">Signal-anchor</keyword>
<keyword id="KW-0812">Transmembrane</keyword>
<keyword id="KW-1133">Transmembrane helix</keyword>
<evidence type="ECO:0000250" key="1"/>
<evidence type="ECO:0000255" key="2"/>
<evidence type="ECO:0000255" key="3">
    <source>
        <dbReference type="PROSITE-ProRule" id="PRU00739"/>
    </source>
</evidence>
<evidence type="ECO:0000256" key="4">
    <source>
        <dbReference type="SAM" id="MobiDB-lite"/>
    </source>
</evidence>
<evidence type="ECO:0000305" key="5"/>
<accession>Q5XK91</accession>
<sequence length="457" mass="51037">MGSDRWKNIRGTPQMEDSVQEKSQRKGCGYILCTVLLSVAVLLAVTVTGAVLFMNQYHAPSTEPPPVITTNMEDPNALVTIERADSSHINIFIDPNCPDTFPRLEGLQSTMLSALADHDSEQKMAGGKERALLTSLSDQVAQMVSQVARQRADWENVKKVQNGLGTEIGALKNEQGRLIKLLSEGQSHVAQLGSSVSEVLETVQRELGSGRPRLKADLQRAPSRSARPRGCANGSKPRDCYDIYMSGQQEDGVYSVFPIHYPSGFQVFCDMTTDGGGWTVFQRREDGSVNFFQGWEQYRDGFGKLTGEHWLGLQGIHLLTMQAHYQLRIDLEDFDNATAYAVYNTFGVGLFSVNPEEDGYPITVSDYTGTAGDSLGKHSGMKFTTKDLDNDHSENNCATFYHGAWWYRNCHTSNLNGQYLRGHHASYADGIEWSSWTGWQYSLKFTEMKIRPQREEN</sequence>
<gene>
    <name type="primary">fibcd1-b</name>
</gene>
<comment type="function">
    <text evidence="1">Acetyl group-binding receptor which shows a calcium-dependent binding to acetylated structures such as chitin, some N-acetylated carbohydrates, and amino acids.</text>
</comment>
<comment type="subunit">
    <text evidence="5">Homotetramer; disulfide-linked.</text>
</comment>
<comment type="subcellular location">
    <subcellularLocation>
        <location evidence="5">Membrane</location>
        <topology evidence="5">Single-pass type II membrane protein</topology>
    </subcellularLocation>
</comment>
<organism>
    <name type="scientific">Xenopus laevis</name>
    <name type="common">African clawed frog</name>
    <dbReference type="NCBI Taxonomy" id="8355"/>
    <lineage>
        <taxon>Eukaryota</taxon>
        <taxon>Metazoa</taxon>
        <taxon>Chordata</taxon>
        <taxon>Craniata</taxon>
        <taxon>Vertebrata</taxon>
        <taxon>Euteleostomi</taxon>
        <taxon>Amphibia</taxon>
        <taxon>Batrachia</taxon>
        <taxon>Anura</taxon>
        <taxon>Pipoidea</taxon>
        <taxon>Pipidae</taxon>
        <taxon>Xenopodinae</taxon>
        <taxon>Xenopus</taxon>
        <taxon>Xenopus</taxon>
    </lineage>
</organism>
<name>FBCDB_XENLA</name>
<reference key="1">
    <citation type="submission" date="2004-09" db="EMBL/GenBank/DDBJ databases">
        <authorList>
            <consortium name="NIH - Xenopus Gene Collection (XGC) project"/>
        </authorList>
    </citation>
    <scope>NUCLEOTIDE SEQUENCE [LARGE SCALE MRNA]</scope>
    <source>
        <tissue>Embryo</tissue>
    </source>
</reference>
<proteinExistence type="evidence at transcript level"/>
<protein>
    <recommendedName>
        <fullName>Fibrinogen C domain-containing protein 1-B</fullName>
    </recommendedName>
</protein>
<dbReference type="EMBL" id="BC083021">
    <property type="protein sequence ID" value="AAH83021.1"/>
    <property type="molecule type" value="mRNA"/>
</dbReference>
<dbReference type="RefSeq" id="NP_001088141.1">
    <property type="nucleotide sequence ID" value="NM_001094672.1"/>
</dbReference>
<dbReference type="RefSeq" id="XP_018087538.1">
    <property type="nucleotide sequence ID" value="XM_018232049.1"/>
</dbReference>
<dbReference type="RefSeq" id="XP_018087539.1">
    <property type="nucleotide sequence ID" value="XM_018232050.1"/>
</dbReference>
<dbReference type="RefSeq" id="XP_018087540.1">
    <property type="nucleotide sequence ID" value="XM_018232051.1"/>
</dbReference>
<dbReference type="RefSeq" id="XP_018087541.1">
    <property type="nucleotide sequence ID" value="XM_018232052.1"/>
</dbReference>
<dbReference type="RefSeq" id="XP_018087542.1">
    <property type="nucleotide sequence ID" value="XM_018232053.1"/>
</dbReference>
<dbReference type="SMR" id="Q5XK91"/>
<dbReference type="GlyCosmos" id="Q5XK91">
    <property type="glycosylation" value="2 sites, No reported glycans"/>
</dbReference>
<dbReference type="GeneID" id="494847"/>
<dbReference type="KEGG" id="xla:494847"/>
<dbReference type="AGR" id="Xenbase:XB-GENE-6255067"/>
<dbReference type="CTD" id="494847"/>
<dbReference type="Xenbase" id="XB-GENE-6255067">
    <property type="gene designation" value="fibcd1.S"/>
</dbReference>
<dbReference type="OMA" id="MVNERWK"/>
<dbReference type="OrthoDB" id="9990035at2759"/>
<dbReference type="Proteomes" id="UP000186698">
    <property type="component" value="Chromosome 8S"/>
</dbReference>
<dbReference type="Bgee" id="494847">
    <property type="expression patterns" value="Expressed in camera-type eye and 13 other cell types or tissues"/>
</dbReference>
<dbReference type="GO" id="GO:0062023">
    <property type="term" value="C:collagen-containing extracellular matrix"/>
    <property type="evidence" value="ECO:0000318"/>
    <property type="project" value="GO_Central"/>
</dbReference>
<dbReference type="GO" id="GO:0005615">
    <property type="term" value="C:extracellular space"/>
    <property type="evidence" value="ECO:0000318"/>
    <property type="project" value="GO_Central"/>
</dbReference>
<dbReference type="GO" id="GO:0016020">
    <property type="term" value="C:membrane"/>
    <property type="evidence" value="ECO:0007669"/>
    <property type="project" value="UniProtKB-SubCell"/>
</dbReference>
<dbReference type="GO" id="GO:0008061">
    <property type="term" value="F:chitin binding"/>
    <property type="evidence" value="ECO:0007669"/>
    <property type="project" value="UniProtKB-KW"/>
</dbReference>
<dbReference type="GO" id="GO:0046872">
    <property type="term" value="F:metal ion binding"/>
    <property type="evidence" value="ECO:0007669"/>
    <property type="project" value="UniProtKB-KW"/>
</dbReference>
<dbReference type="CDD" id="cd00087">
    <property type="entry name" value="FReD"/>
    <property type="match status" value="1"/>
</dbReference>
<dbReference type="FunFam" id="3.90.215.10:FF:000001">
    <property type="entry name" value="Tenascin isoform 1"/>
    <property type="match status" value="1"/>
</dbReference>
<dbReference type="Gene3D" id="3.90.215.10">
    <property type="entry name" value="Gamma Fibrinogen, chain A, domain 1"/>
    <property type="match status" value="1"/>
</dbReference>
<dbReference type="InterPro" id="IPR036056">
    <property type="entry name" value="Fibrinogen-like_C"/>
</dbReference>
<dbReference type="InterPro" id="IPR014716">
    <property type="entry name" value="Fibrinogen_a/b/g_C_1"/>
</dbReference>
<dbReference type="InterPro" id="IPR002181">
    <property type="entry name" value="Fibrinogen_a/b/g_C_dom"/>
</dbReference>
<dbReference type="InterPro" id="IPR050373">
    <property type="entry name" value="Fibrinogen_C-term_domain"/>
</dbReference>
<dbReference type="InterPro" id="IPR020837">
    <property type="entry name" value="Fibrinogen_CS"/>
</dbReference>
<dbReference type="NCBIfam" id="NF040941">
    <property type="entry name" value="GGGWT_bact"/>
    <property type="match status" value="1"/>
</dbReference>
<dbReference type="PANTHER" id="PTHR19143:SF45">
    <property type="entry name" value="FIBRINOGEN C DOMAIN-CONTAINING PROTEIN 1"/>
    <property type="match status" value="1"/>
</dbReference>
<dbReference type="PANTHER" id="PTHR19143">
    <property type="entry name" value="FIBRINOGEN/TENASCIN/ANGIOPOEITIN"/>
    <property type="match status" value="1"/>
</dbReference>
<dbReference type="Pfam" id="PF00147">
    <property type="entry name" value="Fibrinogen_C"/>
    <property type="match status" value="1"/>
</dbReference>
<dbReference type="SMART" id="SM00186">
    <property type="entry name" value="FBG"/>
    <property type="match status" value="1"/>
</dbReference>
<dbReference type="SUPFAM" id="SSF56496">
    <property type="entry name" value="Fibrinogen C-terminal domain-like"/>
    <property type="match status" value="1"/>
</dbReference>
<dbReference type="PROSITE" id="PS00514">
    <property type="entry name" value="FIBRINOGEN_C_1"/>
    <property type="match status" value="1"/>
</dbReference>
<dbReference type="PROSITE" id="PS51406">
    <property type="entry name" value="FIBRINOGEN_C_2"/>
    <property type="match status" value="1"/>
</dbReference>